<reference key="1">
    <citation type="journal article" date="2006" name="Proc. Natl. Acad. Sci. U.S.A.">
        <title>Burkholderia xenovorans LB400 harbors a multi-replicon, 9.73-Mbp genome shaped for versatility.</title>
        <authorList>
            <person name="Chain P.S.G."/>
            <person name="Denef V.J."/>
            <person name="Konstantinidis K.T."/>
            <person name="Vergez L.M."/>
            <person name="Agullo L."/>
            <person name="Reyes V.L."/>
            <person name="Hauser L."/>
            <person name="Cordova M."/>
            <person name="Gomez L."/>
            <person name="Gonzalez M."/>
            <person name="Land M."/>
            <person name="Lao V."/>
            <person name="Larimer F."/>
            <person name="LiPuma J.J."/>
            <person name="Mahenthiralingam E."/>
            <person name="Malfatti S.A."/>
            <person name="Marx C.J."/>
            <person name="Parnell J.J."/>
            <person name="Ramette A."/>
            <person name="Richardson P."/>
            <person name="Seeger M."/>
            <person name="Smith D."/>
            <person name="Spilker T."/>
            <person name="Sul W.J."/>
            <person name="Tsoi T.V."/>
            <person name="Ulrich L.E."/>
            <person name="Zhulin I.B."/>
            <person name="Tiedje J.M."/>
        </authorList>
    </citation>
    <scope>NUCLEOTIDE SEQUENCE [LARGE SCALE GENOMIC DNA]</scope>
    <source>
        <strain>LB400</strain>
    </source>
</reference>
<accession>Q146W9</accession>
<proteinExistence type="inferred from homology"/>
<organism>
    <name type="scientific">Paraburkholderia xenovorans (strain LB400)</name>
    <dbReference type="NCBI Taxonomy" id="266265"/>
    <lineage>
        <taxon>Bacteria</taxon>
        <taxon>Pseudomonadati</taxon>
        <taxon>Pseudomonadota</taxon>
        <taxon>Betaproteobacteria</taxon>
        <taxon>Burkholderiales</taxon>
        <taxon>Burkholderiaceae</taxon>
        <taxon>Paraburkholderia</taxon>
    </lineage>
</organism>
<sequence length="178" mass="19020">MEQFHGTTIVSVRRGDKVALGGDGQVTLGNIVMKGGAKKVRRIYNGKVMVGFAGGTADAFSLLDRFEAKLEKHQGNLTRAAVELAKDWRTDRMLRRLEAMLIAADATTTLVITGNGDVLDPEGGICAIGSGGAYAQAAAKALADNTELSPREIVEKSLEIAGDMCIYTNHNRVIETIE</sequence>
<protein>
    <recommendedName>
        <fullName evidence="1">ATP-dependent protease subunit HslV</fullName>
        <ecNumber evidence="1">3.4.25.2</ecNumber>
    </recommendedName>
</protein>
<evidence type="ECO:0000255" key="1">
    <source>
        <dbReference type="HAMAP-Rule" id="MF_00248"/>
    </source>
</evidence>
<name>HSLV_PARXL</name>
<dbReference type="EC" id="3.4.25.2" evidence="1"/>
<dbReference type="EMBL" id="CP000270">
    <property type="protein sequence ID" value="ABE28620.1"/>
    <property type="molecule type" value="Genomic_DNA"/>
</dbReference>
<dbReference type="RefSeq" id="WP_007179682.1">
    <property type="nucleotide sequence ID" value="NZ_CP008760.1"/>
</dbReference>
<dbReference type="SMR" id="Q146W9"/>
<dbReference type="STRING" id="266265.Bxe_A4380"/>
<dbReference type="MEROPS" id="T01.006"/>
<dbReference type="KEGG" id="bxb:DR64_2056"/>
<dbReference type="KEGG" id="bxe:Bxe_A4380"/>
<dbReference type="eggNOG" id="COG5405">
    <property type="taxonomic scope" value="Bacteria"/>
</dbReference>
<dbReference type="OrthoDB" id="9804884at2"/>
<dbReference type="Proteomes" id="UP000001817">
    <property type="component" value="Chromosome 1"/>
</dbReference>
<dbReference type="GO" id="GO:0009376">
    <property type="term" value="C:HslUV protease complex"/>
    <property type="evidence" value="ECO:0007669"/>
    <property type="project" value="UniProtKB-UniRule"/>
</dbReference>
<dbReference type="GO" id="GO:0005839">
    <property type="term" value="C:proteasome core complex"/>
    <property type="evidence" value="ECO:0007669"/>
    <property type="project" value="InterPro"/>
</dbReference>
<dbReference type="GO" id="GO:0046872">
    <property type="term" value="F:metal ion binding"/>
    <property type="evidence" value="ECO:0007669"/>
    <property type="project" value="UniProtKB-KW"/>
</dbReference>
<dbReference type="GO" id="GO:0004298">
    <property type="term" value="F:threonine-type endopeptidase activity"/>
    <property type="evidence" value="ECO:0007669"/>
    <property type="project" value="UniProtKB-KW"/>
</dbReference>
<dbReference type="GO" id="GO:0051603">
    <property type="term" value="P:proteolysis involved in protein catabolic process"/>
    <property type="evidence" value="ECO:0007669"/>
    <property type="project" value="InterPro"/>
</dbReference>
<dbReference type="CDD" id="cd01913">
    <property type="entry name" value="protease_HslV"/>
    <property type="match status" value="1"/>
</dbReference>
<dbReference type="FunFam" id="3.60.20.10:FF:000002">
    <property type="entry name" value="ATP-dependent protease subunit HslV"/>
    <property type="match status" value="1"/>
</dbReference>
<dbReference type="Gene3D" id="3.60.20.10">
    <property type="entry name" value="Glutamine Phosphoribosylpyrophosphate, subunit 1, domain 1"/>
    <property type="match status" value="1"/>
</dbReference>
<dbReference type="HAMAP" id="MF_00248">
    <property type="entry name" value="HslV"/>
    <property type="match status" value="1"/>
</dbReference>
<dbReference type="InterPro" id="IPR022281">
    <property type="entry name" value="ATP-dep_Prtase_HsIV_su"/>
</dbReference>
<dbReference type="InterPro" id="IPR029055">
    <property type="entry name" value="Ntn_hydrolases_N"/>
</dbReference>
<dbReference type="InterPro" id="IPR001353">
    <property type="entry name" value="Proteasome_sua/b"/>
</dbReference>
<dbReference type="InterPro" id="IPR023333">
    <property type="entry name" value="Proteasome_suB-type"/>
</dbReference>
<dbReference type="NCBIfam" id="TIGR03692">
    <property type="entry name" value="ATP_dep_HslV"/>
    <property type="match status" value="1"/>
</dbReference>
<dbReference type="NCBIfam" id="NF003964">
    <property type="entry name" value="PRK05456.1"/>
    <property type="match status" value="1"/>
</dbReference>
<dbReference type="PANTHER" id="PTHR32194:SF0">
    <property type="entry name" value="ATP-DEPENDENT PROTEASE SUBUNIT HSLV"/>
    <property type="match status" value="1"/>
</dbReference>
<dbReference type="PANTHER" id="PTHR32194">
    <property type="entry name" value="METALLOPROTEASE TLDD"/>
    <property type="match status" value="1"/>
</dbReference>
<dbReference type="Pfam" id="PF00227">
    <property type="entry name" value="Proteasome"/>
    <property type="match status" value="1"/>
</dbReference>
<dbReference type="PIRSF" id="PIRSF039093">
    <property type="entry name" value="HslV"/>
    <property type="match status" value="1"/>
</dbReference>
<dbReference type="SUPFAM" id="SSF56235">
    <property type="entry name" value="N-terminal nucleophile aminohydrolases (Ntn hydrolases)"/>
    <property type="match status" value="1"/>
</dbReference>
<dbReference type="PROSITE" id="PS51476">
    <property type="entry name" value="PROTEASOME_BETA_2"/>
    <property type="match status" value="1"/>
</dbReference>
<keyword id="KW-0021">Allosteric enzyme</keyword>
<keyword id="KW-0963">Cytoplasm</keyword>
<keyword id="KW-0378">Hydrolase</keyword>
<keyword id="KW-0479">Metal-binding</keyword>
<keyword id="KW-0645">Protease</keyword>
<keyword id="KW-1185">Reference proteome</keyword>
<keyword id="KW-0915">Sodium</keyword>
<keyword id="KW-0888">Threonine protease</keyword>
<gene>
    <name evidence="1" type="primary">hslV</name>
    <name type="ordered locus">Bxeno_A0082</name>
    <name type="ORF">Bxe_A4380</name>
</gene>
<feature type="chain" id="PRO_1000012594" description="ATP-dependent protease subunit HslV">
    <location>
        <begin position="1"/>
        <end position="178"/>
    </location>
</feature>
<feature type="active site" evidence="1">
    <location>
        <position position="7"/>
    </location>
</feature>
<feature type="binding site" evidence="1">
    <location>
        <position position="162"/>
    </location>
    <ligand>
        <name>Na(+)</name>
        <dbReference type="ChEBI" id="CHEBI:29101"/>
    </ligand>
</feature>
<feature type="binding site" evidence="1">
    <location>
        <position position="165"/>
    </location>
    <ligand>
        <name>Na(+)</name>
        <dbReference type="ChEBI" id="CHEBI:29101"/>
    </ligand>
</feature>
<feature type="binding site" evidence="1">
    <location>
        <position position="168"/>
    </location>
    <ligand>
        <name>Na(+)</name>
        <dbReference type="ChEBI" id="CHEBI:29101"/>
    </ligand>
</feature>
<comment type="function">
    <text evidence="1">Protease subunit of a proteasome-like degradation complex believed to be a general protein degrading machinery.</text>
</comment>
<comment type="catalytic activity">
    <reaction evidence="1">
        <text>ATP-dependent cleavage of peptide bonds with broad specificity.</text>
        <dbReference type="EC" id="3.4.25.2"/>
    </reaction>
</comment>
<comment type="activity regulation">
    <text evidence="1">Allosterically activated by HslU binding.</text>
</comment>
<comment type="subunit">
    <text evidence="1">A double ring-shaped homohexamer of HslV is capped on each side by a ring-shaped HslU homohexamer. The assembly of the HslU/HslV complex is dependent on binding of ATP.</text>
</comment>
<comment type="subcellular location">
    <subcellularLocation>
        <location evidence="1">Cytoplasm</location>
    </subcellularLocation>
</comment>
<comment type="similarity">
    <text evidence="1">Belongs to the peptidase T1B family. HslV subfamily.</text>
</comment>